<comment type="function">
    <text evidence="6">Involved in CpXpG DNA methylation. Plays a critical role in the maintenance of CpXpG DNA methylation and suppression of a wide spectrum of transposable element (TE) activities. Required for proper plant development in reproductive stage.</text>
</comment>
<comment type="catalytic activity">
    <reaction evidence="8">
        <text>a 2'-deoxycytidine in DNA + S-adenosyl-L-methionine = a 5-methyl-2'-deoxycytidine in DNA + S-adenosyl-L-homocysteine + H(+)</text>
        <dbReference type="Rhea" id="RHEA:13681"/>
        <dbReference type="Rhea" id="RHEA-COMP:11369"/>
        <dbReference type="Rhea" id="RHEA-COMP:11370"/>
        <dbReference type="ChEBI" id="CHEBI:15378"/>
        <dbReference type="ChEBI" id="CHEBI:57856"/>
        <dbReference type="ChEBI" id="CHEBI:59789"/>
        <dbReference type="ChEBI" id="CHEBI:85452"/>
        <dbReference type="ChEBI" id="CHEBI:85454"/>
        <dbReference type="EC" id="2.1.1.37"/>
    </reaction>
</comment>
<comment type="subcellular location">
    <subcellularLocation>
        <location evidence="8">Nucleus</location>
    </subcellularLocation>
</comment>
<comment type="induction">
    <text evidence="5">Down-regulated by salt and dehydration stresses.</text>
</comment>
<comment type="disruption phenotype">
    <text evidence="6">Reduced overall plant height, early flowering and reduced fertility.</text>
</comment>
<comment type="similarity">
    <text evidence="3">Belongs to the class I-like SAM-binding methyltransferase superfamily. C5-methyltransferase family.</text>
</comment>
<comment type="sequence caution" evidence="8">
    <conflict type="erroneous gene model prediction">
        <sequence resource="EMBL-CDS" id="AAL75760"/>
    </conflict>
</comment>
<comment type="sequence caution" evidence="8">
    <conflict type="erroneous gene model prediction">
        <sequence resource="EMBL-CDS" id="ABB46585"/>
    </conflict>
</comment>
<comment type="sequence caution" evidence="8">
    <conflict type="erroneous gene model prediction">
        <sequence resource="EMBL-CDS" id="BAF25937"/>
    </conflict>
</comment>
<comment type="sequence caution" evidence="8">
    <conflict type="erroneous gene model prediction">
        <sequence resource="EMBL-CDS" id="BAT09590"/>
    </conflict>
</comment>
<evidence type="ECO:0000255" key="1">
    <source>
        <dbReference type="PROSITE-ProRule" id="PRU00053"/>
    </source>
</evidence>
<evidence type="ECO:0000255" key="2">
    <source>
        <dbReference type="PROSITE-ProRule" id="PRU00370"/>
    </source>
</evidence>
<evidence type="ECO:0000255" key="3">
    <source>
        <dbReference type="PROSITE-ProRule" id="PRU01016"/>
    </source>
</evidence>
<evidence type="ECO:0000256" key="4">
    <source>
        <dbReference type="SAM" id="MobiDB-lite"/>
    </source>
</evidence>
<evidence type="ECO:0000269" key="5">
    <source>
    </source>
</evidence>
<evidence type="ECO:0000269" key="6">
    <source>
    </source>
</evidence>
<evidence type="ECO:0000303" key="7">
    <source>
    </source>
</evidence>
<evidence type="ECO:0000305" key="8"/>
<evidence type="ECO:0000312" key="9">
    <source>
        <dbReference type="EMBL" id="AAL75760.1"/>
    </source>
</evidence>
<evidence type="ECO:0000312" key="10">
    <source>
        <dbReference type="EMBL" id="ABB46585.2"/>
    </source>
</evidence>
<evidence type="ECO:0000312" key="11">
    <source>
        <dbReference type="EMBL" id="BAT09590.1"/>
    </source>
</evidence>
<evidence type="ECO:0000312" key="12">
    <source>
        <dbReference type="EMBL" id="EEE50451.1"/>
    </source>
</evidence>
<proteinExistence type="evidence at transcript level"/>
<gene>
    <name evidence="8" type="primary">CMT3</name>
    <name evidence="11" type="ordered locus">Os10g0104900</name>
    <name evidence="10" type="ordered locus">LOC_Os10g01570</name>
    <name evidence="12" type="ORF">OsJ_30466</name>
    <name evidence="9" type="ORF">OSJNBa0071K19.14</name>
</gene>
<reference key="1">
    <citation type="journal article" date="2015" name="Plant J.">
        <title>Loss of function mutations in the rice chromomethylase OsCMT3a cause a burst of transposition.</title>
        <authorList>
            <person name="Cheng C."/>
            <person name="Tarutani Y."/>
            <person name="Miyao A."/>
            <person name="Ito T."/>
            <person name="Yamazaki M."/>
            <person name="Sakai H."/>
            <person name="Fukai E."/>
            <person name="Hirochika H."/>
        </authorList>
    </citation>
    <scope>NUCLEOTIDE SEQUENCE [GENOMIC DNA]</scope>
    <scope>FUNCTION</scope>
    <scope>DISRUPTION PHENOTYPE</scope>
    <source>
        <strain>cv. Nipponbare</strain>
    </source>
</reference>
<reference key="2">
    <citation type="journal article" date="2003" name="Science">
        <title>In-depth view of structure, activity, and evolution of rice chromosome 10.</title>
        <authorList>
            <person name="Yu Y."/>
            <person name="Rambo T."/>
            <person name="Currie J."/>
            <person name="Saski C."/>
            <person name="Kim H.-R."/>
            <person name="Collura K."/>
            <person name="Thompson S."/>
            <person name="Simmons J."/>
            <person name="Yang T.-J."/>
            <person name="Nah G."/>
            <person name="Patel A.J."/>
            <person name="Thurmond S."/>
            <person name="Henry D."/>
            <person name="Oates R."/>
            <person name="Palmer M."/>
            <person name="Pries G."/>
            <person name="Gibson J."/>
            <person name="Anderson H."/>
            <person name="Paradkar M."/>
            <person name="Crane L."/>
            <person name="Dale J."/>
            <person name="Carver M.B."/>
            <person name="Wood T."/>
            <person name="Frisch D."/>
            <person name="Engler F."/>
            <person name="Soderlund C."/>
            <person name="Palmer L.E."/>
            <person name="Teytelman L."/>
            <person name="Nascimento L."/>
            <person name="De la Bastide M."/>
            <person name="Spiegel L."/>
            <person name="Ware D."/>
            <person name="O'Shaughnessy A."/>
            <person name="Dike S."/>
            <person name="Dedhia N."/>
            <person name="Preston R."/>
            <person name="Huang E."/>
            <person name="Ferraro K."/>
            <person name="Kuit K."/>
            <person name="Miller B."/>
            <person name="Zutavern T."/>
            <person name="Katzenberger F."/>
            <person name="Muller S."/>
            <person name="Balija V."/>
            <person name="Martienssen R.A."/>
            <person name="Stein L."/>
            <person name="Minx P."/>
            <person name="Johnson D."/>
            <person name="Cordum H."/>
            <person name="Mardis E."/>
            <person name="Cheng Z."/>
            <person name="Jiang J."/>
            <person name="Wilson R."/>
            <person name="McCombie W.R."/>
            <person name="Wing R.A."/>
            <person name="Yuan Q."/>
            <person name="Ouyang S."/>
            <person name="Liu J."/>
            <person name="Jones K.M."/>
            <person name="Gansberger K."/>
            <person name="Moffat K."/>
            <person name="Hill J."/>
            <person name="Tsitrin T."/>
            <person name="Overton L."/>
            <person name="Bera J."/>
            <person name="Kim M."/>
            <person name="Jin S."/>
            <person name="Tallon L."/>
            <person name="Ciecko A."/>
            <person name="Pai G."/>
            <person name="Van Aken S."/>
            <person name="Utterback T."/>
            <person name="Reidmuller S."/>
            <person name="Bormann J."/>
            <person name="Feldblyum T."/>
            <person name="Hsiao J."/>
            <person name="Zismann V."/>
            <person name="Blunt S."/>
            <person name="de Vazeille A.R."/>
            <person name="Shaffer T."/>
            <person name="Koo H."/>
            <person name="Suh B."/>
            <person name="Yang Q."/>
            <person name="Haas B."/>
            <person name="Peterson J."/>
            <person name="Pertea M."/>
            <person name="Volfovsky N."/>
            <person name="Wortman J."/>
            <person name="White O."/>
            <person name="Salzberg S.L."/>
            <person name="Fraser C.M."/>
            <person name="Buell C.R."/>
            <person name="Messing J."/>
            <person name="Song R."/>
            <person name="Fuks G."/>
            <person name="Llaca V."/>
            <person name="Kovchak S."/>
            <person name="Young S."/>
            <person name="Bowers J.E."/>
            <person name="Paterson A.H."/>
            <person name="Johns M.A."/>
            <person name="Mao L."/>
            <person name="Pan H."/>
            <person name="Dean R.A."/>
        </authorList>
    </citation>
    <scope>NUCLEOTIDE SEQUENCE [LARGE SCALE GENOMIC DNA]</scope>
    <source>
        <strain>cv. Nipponbare</strain>
    </source>
</reference>
<reference key="3">
    <citation type="journal article" date="2005" name="Nature">
        <title>The map-based sequence of the rice genome.</title>
        <authorList>
            <consortium name="International rice genome sequencing project (IRGSP)"/>
        </authorList>
    </citation>
    <scope>NUCLEOTIDE SEQUENCE [LARGE SCALE GENOMIC DNA]</scope>
    <source>
        <strain>cv. Nipponbare</strain>
    </source>
</reference>
<reference key="4">
    <citation type="journal article" date="2008" name="Nucleic Acids Res.">
        <title>The rice annotation project database (RAP-DB): 2008 update.</title>
        <authorList>
            <consortium name="The rice annotation project (RAP)"/>
        </authorList>
    </citation>
    <scope>GENOME REANNOTATION</scope>
    <source>
        <strain>cv. Nipponbare</strain>
    </source>
</reference>
<reference key="5">
    <citation type="journal article" date="2013" name="Rice">
        <title>Improvement of the Oryza sativa Nipponbare reference genome using next generation sequence and optical map data.</title>
        <authorList>
            <person name="Kawahara Y."/>
            <person name="de la Bastide M."/>
            <person name="Hamilton J.P."/>
            <person name="Kanamori H."/>
            <person name="McCombie W.R."/>
            <person name="Ouyang S."/>
            <person name="Schwartz D.C."/>
            <person name="Tanaka T."/>
            <person name="Wu J."/>
            <person name="Zhou S."/>
            <person name="Childs K.L."/>
            <person name="Davidson R.M."/>
            <person name="Lin H."/>
            <person name="Quesada-Ocampo L."/>
            <person name="Vaillancourt B."/>
            <person name="Sakai H."/>
            <person name="Lee S.S."/>
            <person name="Kim J."/>
            <person name="Numa H."/>
            <person name="Itoh T."/>
            <person name="Buell C.R."/>
            <person name="Matsumoto T."/>
        </authorList>
    </citation>
    <scope>GENOME REANNOTATION</scope>
    <source>
        <strain>cv. Nipponbare</strain>
    </source>
</reference>
<reference key="6">
    <citation type="journal article" date="2005" name="PLoS Biol.">
        <title>The genomes of Oryza sativa: a history of duplications.</title>
        <authorList>
            <person name="Yu J."/>
            <person name="Wang J."/>
            <person name="Lin W."/>
            <person name="Li S."/>
            <person name="Li H."/>
            <person name="Zhou J."/>
            <person name="Ni P."/>
            <person name="Dong W."/>
            <person name="Hu S."/>
            <person name="Zeng C."/>
            <person name="Zhang J."/>
            <person name="Zhang Y."/>
            <person name="Li R."/>
            <person name="Xu Z."/>
            <person name="Li S."/>
            <person name="Li X."/>
            <person name="Zheng H."/>
            <person name="Cong L."/>
            <person name="Lin L."/>
            <person name="Yin J."/>
            <person name="Geng J."/>
            <person name="Li G."/>
            <person name="Shi J."/>
            <person name="Liu J."/>
            <person name="Lv H."/>
            <person name="Li J."/>
            <person name="Wang J."/>
            <person name="Deng Y."/>
            <person name="Ran L."/>
            <person name="Shi X."/>
            <person name="Wang X."/>
            <person name="Wu Q."/>
            <person name="Li C."/>
            <person name="Ren X."/>
            <person name="Wang J."/>
            <person name="Wang X."/>
            <person name="Li D."/>
            <person name="Liu D."/>
            <person name="Zhang X."/>
            <person name="Ji Z."/>
            <person name="Zhao W."/>
            <person name="Sun Y."/>
            <person name="Zhang Z."/>
            <person name="Bao J."/>
            <person name="Han Y."/>
            <person name="Dong L."/>
            <person name="Ji J."/>
            <person name="Chen P."/>
            <person name="Wu S."/>
            <person name="Liu J."/>
            <person name="Xiao Y."/>
            <person name="Bu D."/>
            <person name="Tan J."/>
            <person name="Yang L."/>
            <person name="Ye C."/>
            <person name="Zhang J."/>
            <person name="Xu J."/>
            <person name="Zhou Y."/>
            <person name="Yu Y."/>
            <person name="Zhang B."/>
            <person name="Zhuang S."/>
            <person name="Wei H."/>
            <person name="Liu B."/>
            <person name="Lei M."/>
            <person name="Yu H."/>
            <person name="Li Y."/>
            <person name="Xu H."/>
            <person name="Wei S."/>
            <person name="He X."/>
            <person name="Fang L."/>
            <person name="Zhang Z."/>
            <person name="Zhang Y."/>
            <person name="Huang X."/>
            <person name="Su Z."/>
            <person name="Tong W."/>
            <person name="Li J."/>
            <person name="Tong Z."/>
            <person name="Li S."/>
            <person name="Ye J."/>
            <person name="Wang L."/>
            <person name="Fang L."/>
            <person name="Lei T."/>
            <person name="Chen C.-S."/>
            <person name="Chen H.-C."/>
            <person name="Xu Z."/>
            <person name="Li H."/>
            <person name="Huang H."/>
            <person name="Zhang F."/>
            <person name="Xu H."/>
            <person name="Li N."/>
            <person name="Zhao C."/>
            <person name="Li S."/>
            <person name="Dong L."/>
            <person name="Huang Y."/>
            <person name="Li L."/>
            <person name="Xi Y."/>
            <person name="Qi Q."/>
            <person name="Li W."/>
            <person name="Zhang B."/>
            <person name="Hu W."/>
            <person name="Zhang Y."/>
            <person name="Tian X."/>
            <person name="Jiao Y."/>
            <person name="Liang X."/>
            <person name="Jin J."/>
            <person name="Gao L."/>
            <person name="Zheng W."/>
            <person name="Hao B."/>
            <person name="Liu S.-M."/>
            <person name="Wang W."/>
            <person name="Yuan L."/>
            <person name="Cao M."/>
            <person name="McDermott J."/>
            <person name="Samudrala R."/>
            <person name="Wang J."/>
            <person name="Wong G.K.-S."/>
            <person name="Yang H."/>
        </authorList>
    </citation>
    <scope>NUCLEOTIDE SEQUENCE [LARGE SCALE GENOMIC DNA]</scope>
    <source>
        <strain>cv. Nipponbare</strain>
    </source>
</reference>
<reference key="7">
    <citation type="journal article" date="2009" name="FEBS J.">
        <title>Rice cytosine DNA methyltransferases - gene expression profiling during reproductive development and abiotic stress.</title>
        <authorList>
            <person name="Sharma R."/>
            <person name="Mohan Singh R.K."/>
            <person name="Malik G."/>
            <person name="Deveshwar P."/>
            <person name="Tyagi A.K."/>
            <person name="Kapoor S."/>
            <person name="Kapoor M."/>
        </authorList>
    </citation>
    <scope>INDUCTION</scope>
</reference>
<sequence>MAPSSPSSAAAPTRTSTRKRAASASASAKATDEPSTKRTRRPKAETKPRKKKDEVKEEEKPPMEDDACGEEPDAEEMALGEEAEAEEAEAEQKQLDAPAPGVARKRVAQPSRVRHGSDGDHDPEFVGDPFPAKEARDKWPQRYQRNAATRRPDEEEDIKARCHYSSAKVDGTLYCLHDDVYVKAEEDKADYIGRITEFFEGTDHCHYFTCRWFFRAEDTVISSIMMENADDEKHDLKRVFLSEEKNDNVLDCIISKVKIVYIDPNMESEAKARRLADCDLYYDMSYTVAYSTFANIPLENGASGSDTASDISSDDVDSSKGKVVSDSEASSVGKATLLDLYSGCGGMSTGLCLGAALAGLNLETRWAVDFNSFACESLKYNHPRTEVRNEKADEFLALLKGWHSLCDEYVKKDIDFSSAGASENEEDDDEPLEKDEFVVEKLAGICYGGSGREDGLYFKVQWKGYGREEDTWEPIENLRDCPLKIKEFVQEGYRRKILPLPGDVDVICGGPPCQGISGFNRFRNRKEPLKDEKNKQMVTFMDIVAYLKPKYVLMENVVDILKFADGYLGRYALSRLVAMKYQARLGMMVAGCYGLPQFRMRVFLWGALPTMVLPKYPLPTHNVVVRGGAPNAFSQSIVAYDETQKPTLKNALLLGDAISDLPEVNNHQPNEVMEYGSSPKTEFQRYIRLSRKEMLDSSFEGKDGPDLGKLLDHQPLKLNKDDHERVQQIPVKKGANFRDLKGVRVGANNIVEWDPDVPRVYLSSGKPLVPDYAMSFIKGRSLKPFGRLWWDETVPTVVTRAEPHNQIILHPNQARVLTVRENARLQGFPDYYKMFGPIKEKYIQVGNAVAVPVARALGYSLGLAYQRESEGSSPLFVLPDSFTEVGRQAAPARASSVGIPVGEVVEQ</sequence>
<name>CMT3_ORYSJ</name>
<feature type="chain" id="PRO_0000438158" description="DNA (cytosine-5)-methyltransferase CMT3">
    <location>
        <begin position="1"/>
        <end position="907"/>
    </location>
</feature>
<feature type="domain" description="BAH" evidence="2">
    <location>
        <begin position="172"/>
        <end position="297"/>
    </location>
</feature>
<feature type="domain" description="SAM-dependent MTase C5-type" evidence="3">
    <location>
        <begin position="335"/>
        <end position="868"/>
    </location>
</feature>
<feature type="domain" description="Chromo" evidence="1">
    <location>
        <begin position="437"/>
        <end position="500"/>
    </location>
</feature>
<feature type="region of interest" description="Disordered" evidence="4">
    <location>
        <begin position="1"/>
        <end position="154"/>
    </location>
</feature>
<feature type="region of interest" description="Disordered" evidence="4">
    <location>
        <begin position="303"/>
        <end position="323"/>
    </location>
</feature>
<feature type="compositionally biased region" description="Low complexity" evidence="4">
    <location>
        <begin position="1"/>
        <end position="15"/>
    </location>
</feature>
<feature type="compositionally biased region" description="Basic and acidic residues" evidence="4">
    <location>
        <begin position="30"/>
        <end position="63"/>
    </location>
</feature>
<feature type="compositionally biased region" description="Acidic residues" evidence="4">
    <location>
        <begin position="64"/>
        <end position="89"/>
    </location>
</feature>
<feature type="compositionally biased region" description="Basic and acidic residues" evidence="4">
    <location>
        <begin position="115"/>
        <end position="124"/>
    </location>
</feature>
<feature type="compositionally biased region" description="Basic and acidic residues" evidence="4">
    <location>
        <begin position="131"/>
        <end position="140"/>
    </location>
</feature>
<feature type="active site" evidence="3">
    <location>
        <position position="513"/>
    </location>
</feature>
<feature type="sequence conflict" description="In Ref. 6; EEE50451." evidence="8" ref="6">
    <original>A</original>
    <variation>P</variation>
    <location>
        <position position="99"/>
    </location>
</feature>
<dbReference type="EC" id="2.1.1.37" evidence="8"/>
<dbReference type="EMBL" id="AB360583">
    <property type="protein sequence ID" value="BAH37019.1"/>
    <property type="molecule type" value="Genomic_DNA"/>
</dbReference>
<dbReference type="EMBL" id="AC069324">
    <property type="protein sequence ID" value="AAL75760.1"/>
    <property type="status" value="ALT_SEQ"/>
    <property type="molecule type" value="Genomic_DNA"/>
</dbReference>
<dbReference type="EMBL" id="DP000086">
    <property type="protein sequence ID" value="ABB46585.2"/>
    <property type="status" value="ALT_SEQ"/>
    <property type="molecule type" value="Genomic_DNA"/>
</dbReference>
<dbReference type="EMBL" id="AP008216">
    <property type="protein sequence ID" value="BAF25937.1"/>
    <property type="status" value="ALT_SEQ"/>
    <property type="molecule type" value="Genomic_DNA"/>
</dbReference>
<dbReference type="EMBL" id="AP014966">
    <property type="protein sequence ID" value="BAT09590.1"/>
    <property type="status" value="ALT_SEQ"/>
    <property type="molecule type" value="Genomic_DNA"/>
</dbReference>
<dbReference type="EMBL" id="CM000147">
    <property type="protein sequence ID" value="EEE50451.1"/>
    <property type="molecule type" value="Genomic_DNA"/>
</dbReference>
<dbReference type="RefSeq" id="XP_015613201.1">
    <property type="nucleotide sequence ID" value="XM_015757715.1"/>
</dbReference>
<dbReference type="SMR" id="C0SQ89"/>
<dbReference type="FunCoup" id="C0SQ89">
    <property type="interactions" value="439"/>
</dbReference>
<dbReference type="STRING" id="39947.C0SQ89"/>
<dbReference type="PaxDb" id="39947-C0SQ89"/>
<dbReference type="EnsemblPlants" id="Os10t0104900-01">
    <property type="protein sequence ID" value="Os10t0104900-01"/>
    <property type="gene ID" value="Os10g0104900"/>
</dbReference>
<dbReference type="Gramene" id="Os10t0104900-01">
    <property type="protein sequence ID" value="Os10t0104900-01"/>
    <property type="gene ID" value="Os10g0104900"/>
</dbReference>
<dbReference type="KEGG" id="dosa:Os10g0104900"/>
<dbReference type="eggNOG" id="ENOG502QW29">
    <property type="taxonomic scope" value="Eukaryota"/>
</dbReference>
<dbReference type="InParanoid" id="C0SQ89"/>
<dbReference type="OrthoDB" id="5376140at2759"/>
<dbReference type="Proteomes" id="UP000000763">
    <property type="component" value="Chromosome 10"/>
</dbReference>
<dbReference type="Proteomes" id="UP000007752">
    <property type="component" value="Chromosome 10"/>
</dbReference>
<dbReference type="Proteomes" id="UP000059680">
    <property type="component" value="Chromosome 10"/>
</dbReference>
<dbReference type="GO" id="GO:0005634">
    <property type="term" value="C:nucleus"/>
    <property type="evidence" value="ECO:0000318"/>
    <property type="project" value="GO_Central"/>
</dbReference>
<dbReference type="GO" id="GO:0003682">
    <property type="term" value="F:chromatin binding"/>
    <property type="evidence" value="ECO:0007669"/>
    <property type="project" value="InterPro"/>
</dbReference>
<dbReference type="GO" id="GO:0003886">
    <property type="term" value="F:DNA (cytosine-5-)-methyltransferase activity"/>
    <property type="evidence" value="ECO:0000318"/>
    <property type="project" value="GO_Central"/>
</dbReference>
<dbReference type="GO" id="GO:0051720">
    <property type="term" value="F:DNA (cytosine-5-)-methyltransferase activity, acting on CpNpG substrates"/>
    <property type="evidence" value="ECO:0000314"/>
    <property type="project" value="GO_Central"/>
</dbReference>
<dbReference type="GO" id="GO:0003677">
    <property type="term" value="F:DNA binding"/>
    <property type="evidence" value="ECO:0000318"/>
    <property type="project" value="GO_Central"/>
</dbReference>
<dbReference type="GO" id="GO:0032259">
    <property type="term" value="P:methylation"/>
    <property type="evidence" value="ECO:0007669"/>
    <property type="project" value="UniProtKB-KW"/>
</dbReference>
<dbReference type="GO" id="GO:0044027">
    <property type="term" value="P:negative regulation of gene expression via chromosomal CpG island methylation"/>
    <property type="evidence" value="ECO:0000318"/>
    <property type="project" value="GO_Central"/>
</dbReference>
<dbReference type="GO" id="GO:0141010">
    <property type="term" value="P:transposable element silencing by siRNA-mediated DNA methylation"/>
    <property type="evidence" value="ECO:0000315"/>
    <property type="project" value="UniProtKB"/>
</dbReference>
<dbReference type="CDD" id="cd04716">
    <property type="entry name" value="BAH_plantDCM_I"/>
    <property type="match status" value="1"/>
</dbReference>
<dbReference type="CDD" id="cd18635">
    <property type="entry name" value="CD_CMT3_like"/>
    <property type="match status" value="1"/>
</dbReference>
<dbReference type="FunFam" id="2.30.30.490:FF:000011">
    <property type="entry name" value="DNA (cytosine-5)-methyltransferase 1"/>
    <property type="match status" value="1"/>
</dbReference>
<dbReference type="FunFam" id="3.40.50.150:FF:000143">
    <property type="entry name" value="DNA (cytosine-5)-methyltransferase 1"/>
    <property type="match status" value="1"/>
</dbReference>
<dbReference type="FunFam" id="3.90.120.10:FF:000003">
    <property type="entry name" value="DNA (cytosine-5)-methyltransferase 1"/>
    <property type="match status" value="1"/>
</dbReference>
<dbReference type="Gene3D" id="2.30.30.490">
    <property type="match status" value="1"/>
</dbReference>
<dbReference type="Gene3D" id="3.90.120.10">
    <property type="entry name" value="DNA Methylase, subunit A, domain 2"/>
    <property type="match status" value="1"/>
</dbReference>
<dbReference type="Gene3D" id="3.40.50.150">
    <property type="entry name" value="Vaccinia Virus protein VP39"/>
    <property type="match status" value="2"/>
</dbReference>
<dbReference type="InterPro" id="IPR001025">
    <property type="entry name" value="BAH_dom"/>
</dbReference>
<dbReference type="InterPro" id="IPR043151">
    <property type="entry name" value="BAH_sf"/>
</dbReference>
<dbReference type="InterPro" id="IPR050390">
    <property type="entry name" value="C5-Methyltransferase"/>
</dbReference>
<dbReference type="InterPro" id="IPR018117">
    <property type="entry name" value="C5_DNA_meth_AS"/>
</dbReference>
<dbReference type="InterPro" id="IPR001525">
    <property type="entry name" value="C5_MeTfrase"/>
</dbReference>
<dbReference type="InterPro" id="IPR016197">
    <property type="entry name" value="Chromo-like_dom_sf"/>
</dbReference>
<dbReference type="InterPro" id="IPR000953">
    <property type="entry name" value="Chromo/chromo_shadow_dom"/>
</dbReference>
<dbReference type="InterPro" id="IPR023780">
    <property type="entry name" value="Chromo_domain"/>
</dbReference>
<dbReference type="InterPro" id="IPR029063">
    <property type="entry name" value="SAM-dependent_MTases_sf"/>
</dbReference>
<dbReference type="PANTHER" id="PTHR10629">
    <property type="entry name" value="CYTOSINE-SPECIFIC METHYLTRANSFERASE"/>
    <property type="match status" value="1"/>
</dbReference>
<dbReference type="PANTHER" id="PTHR10629:SF50">
    <property type="entry name" value="DNA (CYTOSINE-5)-METHYLTRANSFERASE CMT3"/>
    <property type="match status" value="1"/>
</dbReference>
<dbReference type="Pfam" id="PF01426">
    <property type="entry name" value="BAH"/>
    <property type="match status" value="1"/>
</dbReference>
<dbReference type="Pfam" id="PF00385">
    <property type="entry name" value="Chromo"/>
    <property type="match status" value="1"/>
</dbReference>
<dbReference type="Pfam" id="PF00145">
    <property type="entry name" value="DNA_methylase"/>
    <property type="match status" value="1"/>
</dbReference>
<dbReference type="PRINTS" id="PR00105">
    <property type="entry name" value="C5METTRFRASE"/>
</dbReference>
<dbReference type="SMART" id="SM00439">
    <property type="entry name" value="BAH"/>
    <property type="match status" value="1"/>
</dbReference>
<dbReference type="SMART" id="SM00298">
    <property type="entry name" value="CHROMO"/>
    <property type="match status" value="1"/>
</dbReference>
<dbReference type="SUPFAM" id="SSF54160">
    <property type="entry name" value="Chromo domain-like"/>
    <property type="match status" value="1"/>
</dbReference>
<dbReference type="SUPFAM" id="SSF53335">
    <property type="entry name" value="S-adenosyl-L-methionine-dependent methyltransferases"/>
    <property type="match status" value="1"/>
</dbReference>
<dbReference type="PROSITE" id="PS51038">
    <property type="entry name" value="BAH"/>
    <property type="match status" value="1"/>
</dbReference>
<dbReference type="PROSITE" id="PS00094">
    <property type="entry name" value="C5_MTASE_1"/>
    <property type="match status" value="1"/>
</dbReference>
<dbReference type="PROSITE" id="PS50013">
    <property type="entry name" value="CHROMO_2"/>
    <property type="match status" value="1"/>
</dbReference>
<dbReference type="PROSITE" id="PS51679">
    <property type="entry name" value="SAM_MT_C5"/>
    <property type="match status" value="1"/>
</dbReference>
<keyword id="KW-0238">DNA-binding</keyword>
<keyword id="KW-0489">Methyltransferase</keyword>
<keyword id="KW-0539">Nucleus</keyword>
<keyword id="KW-1185">Reference proteome</keyword>
<keyword id="KW-0949">S-adenosyl-L-methionine</keyword>
<keyword id="KW-0808">Transferase</keyword>
<accession>C0SQ89</accession>
<accession>B9G594</accession>
<accession>Q0IZC8</accession>
<accession>Q33BI4</accession>
<accession>Q9AYI4</accession>
<organism>
    <name type="scientific">Oryza sativa subsp. japonica</name>
    <name type="common">Rice</name>
    <dbReference type="NCBI Taxonomy" id="39947"/>
    <lineage>
        <taxon>Eukaryota</taxon>
        <taxon>Viridiplantae</taxon>
        <taxon>Streptophyta</taxon>
        <taxon>Embryophyta</taxon>
        <taxon>Tracheophyta</taxon>
        <taxon>Spermatophyta</taxon>
        <taxon>Magnoliopsida</taxon>
        <taxon>Liliopsida</taxon>
        <taxon>Poales</taxon>
        <taxon>Poaceae</taxon>
        <taxon>BOP clade</taxon>
        <taxon>Oryzoideae</taxon>
        <taxon>Oryzeae</taxon>
        <taxon>Oryzinae</taxon>
        <taxon>Oryza</taxon>
        <taxon>Oryza sativa</taxon>
    </lineage>
</organism>
<protein>
    <recommendedName>
        <fullName evidence="8">DNA (cytosine-5)-methyltransferase CMT3</fullName>
        <ecNumber evidence="8">2.1.1.37</ecNumber>
    </recommendedName>
    <alternativeName>
        <fullName evidence="8">Chromomethylase 3</fullName>
    </alternativeName>
    <alternativeName>
        <fullName evidence="7">OsCMT3a</fullName>
    </alternativeName>
</protein>